<accession>P9WLP3</accession>
<accession>L0T8B5</accession>
<accession>P64915</accession>
<accession>Q10863</accession>
<keyword id="KW-1185">Reference proteome</keyword>
<proteinExistence type="evidence at protein level"/>
<name>Y1995_MYCTU</name>
<dbReference type="EMBL" id="AL123456">
    <property type="protein sequence ID" value="CCP44767.1"/>
    <property type="molecule type" value="Genomic_DNA"/>
</dbReference>
<dbReference type="PIR" id="A70758">
    <property type="entry name" value="A70758"/>
</dbReference>
<dbReference type="RefSeq" id="NP_216511.1">
    <property type="nucleotide sequence ID" value="NC_000962.3"/>
</dbReference>
<dbReference type="RefSeq" id="WP_003410019.1">
    <property type="nucleotide sequence ID" value="NZ_NVQJ01000043.1"/>
</dbReference>
<dbReference type="SMR" id="P9WLP3"/>
<dbReference type="STRING" id="83332.Rv1995"/>
<dbReference type="PaxDb" id="83332-Rv1995"/>
<dbReference type="DNASU" id="888917"/>
<dbReference type="GeneID" id="888917"/>
<dbReference type="KEGG" id="mtu:Rv1995"/>
<dbReference type="KEGG" id="mtv:RVBD_1995"/>
<dbReference type="PATRIC" id="fig|83332.111.peg.2221"/>
<dbReference type="TubercuList" id="Rv1995"/>
<dbReference type="eggNOG" id="COG3945">
    <property type="taxonomic scope" value="Bacteria"/>
</dbReference>
<dbReference type="InParanoid" id="P9WLP3"/>
<dbReference type="OrthoDB" id="2083283at2"/>
<dbReference type="Proteomes" id="UP000001584">
    <property type="component" value="Chromosome"/>
</dbReference>
<dbReference type="GO" id="GO:0005886">
    <property type="term" value="C:plasma membrane"/>
    <property type="evidence" value="ECO:0007005"/>
    <property type="project" value="MTBBASE"/>
</dbReference>
<dbReference type="CDD" id="cd12108">
    <property type="entry name" value="Hr-like"/>
    <property type="match status" value="1"/>
</dbReference>
<dbReference type="Gene3D" id="1.20.120.520">
    <property type="entry name" value="nmb1532 protein domain like"/>
    <property type="match status" value="1"/>
</dbReference>
<dbReference type="InterPro" id="IPR012312">
    <property type="entry name" value="Hemerythrin-like"/>
</dbReference>
<dbReference type="PANTHER" id="PTHR39966">
    <property type="entry name" value="BLL2471 PROTEIN-RELATED"/>
    <property type="match status" value="1"/>
</dbReference>
<dbReference type="PANTHER" id="PTHR39966:SF1">
    <property type="entry name" value="HEMERYTHRIN-LIKE DOMAIN-CONTAINING PROTEIN"/>
    <property type="match status" value="1"/>
</dbReference>
<dbReference type="Pfam" id="PF01814">
    <property type="entry name" value="Hemerythrin"/>
    <property type="match status" value="2"/>
</dbReference>
<gene>
    <name type="ordered locus">Rv1995</name>
    <name type="ORF">MTCY39.24c</name>
</gene>
<feature type="chain" id="PRO_0000103922" description="Uncharacterized protein Rv1995">
    <location>
        <begin position="1"/>
        <end position="255"/>
    </location>
</feature>
<feature type="region of interest" description="Disordered" evidence="1">
    <location>
        <begin position="42"/>
        <end position="67"/>
    </location>
</feature>
<protein>
    <recommendedName>
        <fullName>Uncharacterized protein Rv1995</fullName>
    </recommendedName>
</protein>
<sequence>MVASGAATKGVTVMKQTPPAAVGRRHLLEISASAAGVIALSACSGSPPEPGKGRPDTTPEQEVPVTAPEDLMREHGVLKRILLIYREGIRRLQADDQSPAPALNESAQIIRRFIEDYHGQLEEQYVFPKLEQAGKLTDITSVLRTQHQRGRVLTDRVLAATTAAAAFDQPARDTLAQDMAAYIRMFEPHEAREDTVVFPALRDVMSAVEFRDMAETFEDEEHRRFGEAGFQSVVDKVADIEKSLGIYDLSQFTPS</sequence>
<evidence type="ECO:0000256" key="1">
    <source>
        <dbReference type="SAM" id="MobiDB-lite"/>
    </source>
</evidence>
<organism>
    <name type="scientific">Mycobacterium tuberculosis (strain ATCC 25618 / H37Rv)</name>
    <dbReference type="NCBI Taxonomy" id="83332"/>
    <lineage>
        <taxon>Bacteria</taxon>
        <taxon>Bacillati</taxon>
        <taxon>Actinomycetota</taxon>
        <taxon>Actinomycetes</taxon>
        <taxon>Mycobacteriales</taxon>
        <taxon>Mycobacteriaceae</taxon>
        <taxon>Mycobacterium</taxon>
        <taxon>Mycobacterium tuberculosis complex</taxon>
    </lineage>
</organism>
<reference key="1">
    <citation type="journal article" date="1998" name="Nature">
        <title>Deciphering the biology of Mycobacterium tuberculosis from the complete genome sequence.</title>
        <authorList>
            <person name="Cole S.T."/>
            <person name="Brosch R."/>
            <person name="Parkhill J."/>
            <person name="Garnier T."/>
            <person name="Churcher C.M."/>
            <person name="Harris D.E."/>
            <person name="Gordon S.V."/>
            <person name="Eiglmeier K."/>
            <person name="Gas S."/>
            <person name="Barry C.E. III"/>
            <person name="Tekaia F."/>
            <person name="Badcock K."/>
            <person name="Basham D."/>
            <person name="Brown D."/>
            <person name="Chillingworth T."/>
            <person name="Connor R."/>
            <person name="Davies R.M."/>
            <person name="Devlin K."/>
            <person name="Feltwell T."/>
            <person name="Gentles S."/>
            <person name="Hamlin N."/>
            <person name="Holroyd S."/>
            <person name="Hornsby T."/>
            <person name="Jagels K."/>
            <person name="Krogh A."/>
            <person name="McLean J."/>
            <person name="Moule S."/>
            <person name="Murphy L.D."/>
            <person name="Oliver S."/>
            <person name="Osborne J."/>
            <person name="Quail M.A."/>
            <person name="Rajandream M.A."/>
            <person name="Rogers J."/>
            <person name="Rutter S."/>
            <person name="Seeger K."/>
            <person name="Skelton S."/>
            <person name="Squares S."/>
            <person name="Squares R."/>
            <person name="Sulston J.E."/>
            <person name="Taylor K."/>
            <person name="Whitehead S."/>
            <person name="Barrell B.G."/>
        </authorList>
    </citation>
    <scope>NUCLEOTIDE SEQUENCE [LARGE SCALE GENOMIC DNA]</scope>
    <source>
        <strain>ATCC 25618 / H37Rv</strain>
    </source>
</reference>
<reference key="2">
    <citation type="journal article" date="2011" name="Mol. Cell. Proteomics">
        <title>Proteogenomic analysis of Mycobacterium tuberculosis by high resolution mass spectrometry.</title>
        <authorList>
            <person name="Kelkar D.S."/>
            <person name="Kumar D."/>
            <person name="Kumar P."/>
            <person name="Balakrishnan L."/>
            <person name="Muthusamy B."/>
            <person name="Yadav A.K."/>
            <person name="Shrivastava P."/>
            <person name="Marimuthu A."/>
            <person name="Anand S."/>
            <person name="Sundaram H."/>
            <person name="Kingsbury R."/>
            <person name="Harsha H.C."/>
            <person name="Nair B."/>
            <person name="Prasad T.S."/>
            <person name="Chauhan D.S."/>
            <person name="Katoch K."/>
            <person name="Katoch V.M."/>
            <person name="Kumar P."/>
            <person name="Chaerkady R."/>
            <person name="Ramachandran S."/>
            <person name="Dash D."/>
            <person name="Pandey A."/>
        </authorList>
    </citation>
    <scope>IDENTIFICATION BY MASS SPECTROMETRY [LARGE SCALE ANALYSIS]</scope>
    <source>
        <strain>ATCC 25618 / H37Rv</strain>
    </source>
</reference>